<organism evidence="10">
    <name type="scientific">Caenorhabditis elegans</name>
    <dbReference type="NCBI Taxonomy" id="6239"/>
    <lineage>
        <taxon>Eukaryota</taxon>
        <taxon>Metazoa</taxon>
        <taxon>Ecdysozoa</taxon>
        <taxon>Nematoda</taxon>
        <taxon>Chromadorea</taxon>
        <taxon>Rhabditida</taxon>
        <taxon>Rhabditina</taxon>
        <taxon>Rhabditomorpha</taxon>
        <taxon>Rhabditoidea</taxon>
        <taxon>Rhabditidae</taxon>
        <taxon>Peloderinae</taxon>
        <taxon>Caenorhabditis</taxon>
    </lineage>
</organism>
<proteinExistence type="evidence at protein level"/>
<reference evidence="9 10" key="1">
    <citation type="journal article" date="1998" name="Science">
        <title>Genome sequence of the nematode C. elegans: a platform for investigating biology.</title>
        <authorList>
            <consortium name="The C. elegans sequencing consortium"/>
        </authorList>
    </citation>
    <scope>NUCLEOTIDE SEQUENCE [LARGE SCALE GENOMIC DNA]</scope>
    <source>
        <strain evidence="9 10">Bristol N2</strain>
    </source>
</reference>
<reference key="2">
    <citation type="journal article" date="2004" name="Mol. Cell. Biol.">
        <title>SMU-2 and SMU-1, Caenorhabditis elegans homologs of mammalian spliceosome-associated proteins RED and fSAP57, work together to affect splice site choice.</title>
        <authorList>
            <person name="Spartz A.K."/>
            <person name="Herman R.K."/>
            <person name="Shaw J.E."/>
        </authorList>
    </citation>
    <scope>FUNCTION</scope>
    <scope>SUBCELLULAR LOCATION</scope>
    <scope>INTERACTION WITH SMU-1</scope>
    <scope>DISRUPTION PHENOTYPE</scope>
    <scope>DEVELOPMENTAL STAGE</scope>
    <scope>TISSUE SPECIFICITY</scope>
</reference>
<reference evidence="12 13" key="3">
    <citation type="journal article" date="2016" name="Structure">
        <title>Structural Basis for the Functional Coupling of the Alternative Splicing Factors Smu1 and RED.</title>
        <authorList>
            <person name="Ulrich A.K."/>
            <person name="Schulz J.F."/>
            <person name="Kamprad A."/>
            <person name="Schuetze T."/>
            <person name="Wahl M.C."/>
        </authorList>
    </citation>
    <scope>X-RAY CRYSTALLOGRAPHY (2.94 ANGSTROMS) OF 163-223 IN COMPLEX WITH SMU-1</scope>
    <scope>INTERACTION WITH SMU-1</scope>
    <scope>DOMAIN</scope>
    <scope>MUTAGENESIS OF VAL-212 AND PHE-220</scope>
</reference>
<name>SMU2_CAEEL</name>
<gene>
    <name evidence="11" type="primary">smu-2</name>
    <name evidence="11" type="ORF">Y49F6B.4</name>
</gene>
<dbReference type="EMBL" id="BX284602">
    <property type="protein sequence ID" value="CCD64715.1"/>
    <property type="molecule type" value="Genomic_DNA"/>
</dbReference>
<dbReference type="RefSeq" id="NP_494559.1">
    <property type="nucleotide sequence ID" value="NM_062158.5"/>
</dbReference>
<dbReference type="PDB" id="5EN6">
    <property type="method" value="X-ray"/>
    <property type="resolution" value="3.10 A"/>
    <property type="chains" value="C/D=163-223"/>
</dbReference>
<dbReference type="PDB" id="5EN7">
    <property type="method" value="X-ray"/>
    <property type="resolution" value="2.94 A"/>
    <property type="chains" value="B/D/F/H=163-223"/>
</dbReference>
<dbReference type="PDBsum" id="5EN6"/>
<dbReference type="PDBsum" id="5EN7"/>
<dbReference type="SMR" id="Q9N4U5"/>
<dbReference type="DIP" id="DIP-55152N"/>
<dbReference type="FunCoup" id="Q9N4U5">
    <property type="interactions" value="3180"/>
</dbReference>
<dbReference type="IntAct" id="Q9N4U5">
    <property type="interactions" value="3"/>
</dbReference>
<dbReference type="STRING" id="6239.Y49F6B.4.1"/>
<dbReference type="PaxDb" id="6239-Y49F6B.4"/>
<dbReference type="PeptideAtlas" id="Q9N4U5"/>
<dbReference type="EnsemblMetazoa" id="Y49F6B.4.1">
    <property type="protein sequence ID" value="Y49F6B.4.1"/>
    <property type="gene ID" value="WBGene00004896"/>
</dbReference>
<dbReference type="GeneID" id="173693"/>
<dbReference type="KEGG" id="cel:CELE_Y49F6B.4"/>
<dbReference type="UCSC" id="Y49F6B.4">
    <property type="organism name" value="c. elegans"/>
</dbReference>
<dbReference type="AGR" id="WB:WBGene00004896"/>
<dbReference type="CTD" id="173693"/>
<dbReference type="WormBase" id="Y49F6B.4">
    <property type="protein sequence ID" value="CE25338"/>
    <property type="gene ID" value="WBGene00004896"/>
    <property type="gene designation" value="smu-2"/>
</dbReference>
<dbReference type="eggNOG" id="KOG2498">
    <property type="taxonomic scope" value="Eukaryota"/>
</dbReference>
<dbReference type="GeneTree" id="ENSGT00940000165879"/>
<dbReference type="HOGENOM" id="CLU_026814_2_0_1"/>
<dbReference type="InParanoid" id="Q9N4U5"/>
<dbReference type="OMA" id="WQQTNGY"/>
<dbReference type="OrthoDB" id="3366823at2759"/>
<dbReference type="PhylomeDB" id="Q9N4U5"/>
<dbReference type="PRO" id="PR:Q9N4U5"/>
<dbReference type="Proteomes" id="UP000001940">
    <property type="component" value="Chromosome II"/>
</dbReference>
<dbReference type="Bgee" id="WBGene00004896">
    <property type="expression patterns" value="Expressed in embryo and 4 other cell types or tissues"/>
</dbReference>
<dbReference type="GO" id="GO:0005730">
    <property type="term" value="C:nucleolus"/>
    <property type="evidence" value="ECO:0000314"/>
    <property type="project" value="WormBase"/>
</dbReference>
<dbReference type="GO" id="GO:0005634">
    <property type="term" value="C:nucleus"/>
    <property type="evidence" value="ECO:0000314"/>
    <property type="project" value="WormBase"/>
</dbReference>
<dbReference type="GO" id="GO:0005681">
    <property type="term" value="C:spliceosomal complex"/>
    <property type="evidence" value="ECO:0007669"/>
    <property type="project" value="UniProtKB-KW"/>
</dbReference>
<dbReference type="GO" id="GO:0009792">
    <property type="term" value="P:embryo development ending in birth or egg hatching"/>
    <property type="evidence" value="ECO:0000316"/>
    <property type="project" value="WormBase"/>
</dbReference>
<dbReference type="GO" id="GO:0040011">
    <property type="term" value="P:locomotion"/>
    <property type="evidence" value="ECO:0000316"/>
    <property type="project" value="WormBase"/>
</dbReference>
<dbReference type="GO" id="GO:0007638">
    <property type="term" value="P:mechanosensory behavior"/>
    <property type="evidence" value="ECO:0000316"/>
    <property type="project" value="WormBase"/>
</dbReference>
<dbReference type="GO" id="GO:0000398">
    <property type="term" value="P:mRNA splicing, via spliceosome"/>
    <property type="evidence" value="ECO:0000318"/>
    <property type="project" value="GO_Central"/>
</dbReference>
<dbReference type="GO" id="GO:0048644">
    <property type="term" value="P:muscle organ morphogenesis"/>
    <property type="evidence" value="ECO:0000316"/>
    <property type="project" value="WormBase"/>
</dbReference>
<dbReference type="GO" id="GO:0002119">
    <property type="term" value="P:nematode larval development"/>
    <property type="evidence" value="ECO:0000316"/>
    <property type="project" value="WormBase"/>
</dbReference>
<dbReference type="GO" id="GO:0048666">
    <property type="term" value="P:neuron development"/>
    <property type="evidence" value="ECO:0000316"/>
    <property type="project" value="WormBase"/>
</dbReference>
<dbReference type="GO" id="GO:0000381">
    <property type="term" value="P:regulation of alternative mRNA splicing, via spliceosome"/>
    <property type="evidence" value="ECO:0000315"/>
    <property type="project" value="WormBase"/>
</dbReference>
<dbReference type="DisProt" id="DP01313"/>
<dbReference type="InterPro" id="IPR039896">
    <property type="entry name" value="Red-like"/>
</dbReference>
<dbReference type="InterPro" id="IPR012492">
    <property type="entry name" value="RED_C"/>
</dbReference>
<dbReference type="InterPro" id="IPR012916">
    <property type="entry name" value="RED_N"/>
</dbReference>
<dbReference type="PANTHER" id="PTHR12765">
    <property type="entry name" value="RED PROTEIN IK FACTOR CYTOKINE IK"/>
    <property type="match status" value="1"/>
</dbReference>
<dbReference type="Pfam" id="PF07807">
    <property type="entry name" value="RED_C"/>
    <property type="match status" value="1"/>
</dbReference>
<dbReference type="Pfam" id="PF07808">
    <property type="entry name" value="RED_N"/>
    <property type="match status" value="1"/>
</dbReference>
<keyword id="KW-0002">3D-structure</keyword>
<keyword id="KW-0175">Coiled coil</keyword>
<keyword id="KW-0507">mRNA processing</keyword>
<keyword id="KW-0508">mRNA splicing</keyword>
<keyword id="KW-0539">Nucleus</keyword>
<keyword id="KW-1185">Reference proteome</keyword>
<keyword id="KW-0677">Repeat</keyword>
<keyword id="KW-0747">Spliceosome</keyword>
<protein>
    <recommendedName>
        <fullName evidence="7">Smu-2 suppressor of mec-8 and unc-52 protein</fullName>
    </recommendedName>
    <alternativeName>
        <fullName evidence="6">RED homolog</fullName>
    </alternativeName>
    <alternativeName>
        <fullName evidence="7">Suppressor of Mec and Unc defects 2</fullName>
    </alternativeName>
</protein>
<sequence length="547" mass="62197">MADNPTNLRNADFRKLLTSARSDRPAVSAFAKPADPKTGDDKPASFKHKHLKPAKFKKPQAAAHGKAKKEKTEADEDEAALKNILKNYRDRAAERRKQGDEKEDPSKLTAAYRAVPGDARSAQDQADLRKQAILESKYLGGDLEHTHLVKGLDYSLLNKVRSEIDKSDDDDDDDIDTAFDEKVTSSSSSSKPSEASLLAQELAQSHSENRMVRSLHRVLFKNEVPLHNQLFAKGRMAYVVELEDEETDIPTTLLRSLHDLPRAESAQSIQANNLIILKLSHVLSHLRAEPKKKKKEEFRVQLGSRDAPGAAAAAPGAKGDSIYDDLDDYVPSRKSRDSRDAGRRGSRRDRSRDRSRDRDRDRDRDNRDRYFEKSANSRREEEQNRREQQRERERAEQERRREREKEREQEKAKEREKKRKELEESSGYDECYPGGLVEMGGAWDSDEEADYSKMDAGPKKNQAVNRWDFDTEEEYASYMEGREALPKAAYQYGVKNGEGGRKNKKQSAVSDAKRLDRELNEINKIMDKRKAGGDGAGGGGDYKKPKY</sequence>
<comment type="function">
    <text evidence="4 7">Auxiliary spliceosomal protein that regulates selection of alternative splice sites in a small set of target pre-mRNA species (Probable). Selectively regulates alternative splicing of unc-52 exon 17. Thus, smu-2 mutants selectively suppress the effects of unc-52 nonsense mutations in exon 17 by promoting the accumulation of unc-52 isoforms that lack exon 17. In contrast, smu-2 mutants do not suppress the effects of an unc-52 mutation that affects the 5' splice site of exon 16. Required for normal accumulation of smu-1 (PubMed:15254247).</text>
</comment>
<comment type="subunit">
    <text evidence="1 4 5">Probable component of the spliceosome (By similarity). Heterotetramer with smu-1 (PubMed:27150041). The smu-1 homodimer interacts (via the N-terminal region including the LisH and CTLH domains) with smu-2, giving rise to a heterotetramer (PubMed:15254247, PubMed:27150041).</text>
</comment>
<comment type="interaction">
    <interactant intactId="EBI-2415311">
        <id>Q9N4U5</id>
    </interactant>
    <interactant intactId="EBI-2411547">
        <id>G5EEG7</id>
        <label>smu-1</label>
    </interactant>
    <organismsDiffer>false</organismsDiffer>
    <experiments>6</experiments>
</comment>
<comment type="subcellular location">
    <subcellularLocation>
        <location evidence="4">Nucleus</location>
    </subcellularLocation>
</comment>
<comment type="tissue specificity">
    <text evidence="4">Ubiquitous.</text>
</comment>
<comment type="developmental stage">
    <text evidence="4">Detected at all stages of development, during early embryogenesis and in oocytes, in larvae and adults.</text>
</comment>
<comment type="domain">
    <text evidence="8">Intrinsically disordered protein (Probable).</text>
</comment>
<comment type="disruption phenotype">
    <text evidence="4">RNAi-mediated knockdown gives rise to no visible phenotype in wild-type, but suppresses the effects of unc-52 mutations.</text>
</comment>
<comment type="similarity">
    <text evidence="7">Belongs to the RED family.</text>
</comment>
<feature type="chain" id="PRO_0000441749" description="Smu-2 suppressor of mec-8 and unc-52 protein">
    <location>
        <begin position="1"/>
        <end position="547"/>
    </location>
</feature>
<feature type="repeat" description="1">
    <location>
        <begin position="336"/>
        <end position="337"/>
    </location>
</feature>
<feature type="repeat" description="2">
    <location>
        <begin position="339"/>
        <end position="340"/>
    </location>
</feature>
<feature type="repeat" description="3">
    <location>
        <begin position="348"/>
        <end position="349"/>
    </location>
</feature>
<feature type="repeat" description="4">
    <location>
        <begin position="350"/>
        <end position="351"/>
    </location>
</feature>
<feature type="repeat" description="5">
    <location>
        <begin position="352"/>
        <end position="353"/>
    </location>
</feature>
<feature type="repeat" description="6">
    <location>
        <begin position="354"/>
        <end position="355"/>
    </location>
</feature>
<feature type="repeat" description="7">
    <location>
        <begin position="356"/>
        <end position="357"/>
    </location>
</feature>
<feature type="repeat" description="8">
    <location>
        <begin position="358"/>
        <end position="359"/>
    </location>
</feature>
<feature type="repeat" description="9">
    <location>
        <begin position="360"/>
        <end position="361"/>
    </location>
</feature>
<feature type="repeat" description="10">
    <location>
        <begin position="362"/>
        <end position="363"/>
    </location>
</feature>
<feature type="repeat" description="11">
    <location>
        <begin position="364"/>
        <end position="365"/>
    </location>
</feature>
<feature type="repeat" description="12">
    <location>
        <begin position="367"/>
        <end position="368"/>
    </location>
</feature>
<feature type="region of interest" description="Disordered" evidence="3">
    <location>
        <begin position="18"/>
        <end position="125"/>
    </location>
</feature>
<feature type="region of interest" description="Required and sufficient for interaction with smu-1" evidence="5">
    <location>
        <begin position="163"/>
        <end position="223"/>
    </location>
</feature>
<feature type="region of interest" description="Disordered" evidence="3">
    <location>
        <begin position="164"/>
        <end position="202"/>
    </location>
</feature>
<feature type="region of interest" description="Disordered" evidence="3">
    <location>
        <begin position="288"/>
        <end position="459"/>
    </location>
</feature>
<feature type="region of interest" description="12 X 2 AA repeats of R-[DS]">
    <location>
        <begin position="336"/>
        <end position="368"/>
    </location>
</feature>
<feature type="region of interest" description="Disordered" evidence="3">
    <location>
        <begin position="496"/>
        <end position="515"/>
    </location>
</feature>
<feature type="region of interest" description="Disordered" evidence="3">
    <location>
        <begin position="524"/>
        <end position="547"/>
    </location>
</feature>
<feature type="coiled-coil region" evidence="2">
    <location>
        <begin position="66"/>
        <end position="94"/>
    </location>
</feature>
<feature type="coiled-coil region" evidence="2">
    <location>
        <begin position="371"/>
        <end position="427"/>
    </location>
</feature>
<feature type="compositionally biased region" description="Basic and acidic residues" evidence="3">
    <location>
        <begin position="34"/>
        <end position="44"/>
    </location>
</feature>
<feature type="compositionally biased region" description="Basic residues" evidence="3">
    <location>
        <begin position="45"/>
        <end position="58"/>
    </location>
</feature>
<feature type="compositionally biased region" description="Basic and acidic residues" evidence="3">
    <location>
        <begin position="87"/>
        <end position="106"/>
    </location>
</feature>
<feature type="compositionally biased region" description="Acidic residues" evidence="3">
    <location>
        <begin position="166"/>
        <end position="178"/>
    </location>
</feature>
<feature type="compositionally biased region" description="Low complexity" evidence="3">
    <location>
        <begin position="185"/>
        <end position="196"/>
    </location>
</feature>
<feature type="compositionally biased region" description="Low complexity" evidence="3">
    <location>
        <begin position="307"/>
        <end position="317"/>
    </location>
</feature>
<feature type="compositionally biased region" description="Basic and acidic residues" evidence="3">
    <location>
        <begin position="330"/>
        <end position="423"/>
    </location>
</feature>
<feature type="mutagenesis site" description="Disrupts interaction with smu-1." evidence="5">
    <original>V</original>
    <variation>R</variation>
    <location>
        <position position="212"/>
    </location>
</feature>
<feature type="mutagenesis site" description="Disrupts interaction with smu-1." evidence="5">
    <original>F</original>
    <variation>R</variation>
    <location>
        <position position="220"/>
    </location>
</feature>
<feature type="helix" evidence="14">
    <location>
        <begin position="195"/>
        <end position="203"/>
    </location>
</feature>
<feature type="helix" evidence="14">
    <location>
        <begin position="210"/>
        <end position="220"/>
    </location>
</feature>
<accession>Q9N4U5</accession>
<evidence type="ECO:0000250" key="1">
    <source>
        <dbReference type="UniProtKB" id="Q13123"/>
    </source>
</evidence>
<evidence type="ECO:0000255" key="2"/>
<evidence type="ECO:0000256" key="3">
    <source>
        <dbReference type="SAM" id="MobiDB-lite"/>
    </source>
</evidence>
<evidence type="ECO:0000269" key="4">
    <source>
    </source>
</evidence>
<evidence type="ECO:0000269" key="5">
    <source>
    </source>
</evidence>
<evidence type="ECO:0000303" key="6">
    <source>
    </source>
</evidence>
<evidence type="ECO:0000305" key="7"/>
<evidence type="ECO:0000305" key="8">
    <source>
    </source>
</evidence>
<evidence type="ECO:0000312" key="9">
    <source>
        <dbReference type="EMBL" id="CCD64715.1"/>
    </source>
</evidence>
<evidence type="ECO:0000312" key="10">
    <source>
        <dbReference type="Proteomes" id="UP000001940"/>
    </source>
</evidence>
<evidence type="ECO:0000312" key="11">
    <source>
        <dbReference type="WormBase" id="Y49F6B.4"/>
    </source>
</evidence>
<evidence type="ECO:0007744" key="12">
    <source>
        <dbReference type="PDB" id="5EN6"/>
    </source>
</evidence>
<evidence type="ECO:0007744" key="13">
    <source>
        <dbReference type="PDB" id="5EN7"/>
    </source>
</evidence>
<evidence type="ECO:0007829" key="14">
    <source>
        <dbReference type="PDB" id="5EN7"/>
    </source>
</evidence>